<proteinExistence type="inferred from homology"/>
<dbReference type="EMBL" id="AE005174">
    <property type="protein sequence ID" value="AAG54915.1"/>
    <property type="status" value="ALT_INIT"/>
    <property type="molecule type" value="Genomic_DNA"/>
</dbReference>
<dbReference type="EMBL" id="BA000007">
    <property type="protein sequence ID" value="BAB34043.1"/>
    <property type="molecule type" value="Genomic_DNA"/>
</dbReference>
<dbReference type="PIR" id="D90706">
    <property type="entry name" value="D90706"/>
</dbReference>
<dbReference type="PIR" id="G85556">
    <property type="entry name" value="G85556"/>
</dbReference>
<dbReference type="SMR" id="Q8XBX0"/>
<dbReference type="STRING" id="155864.Z0721"/>
<dbReference type="KEGG" id="ece:Z0721"/>
<dbReference type="KEGG" id="ecs:ECs_0620"/>
<dbReference type="PATRIC" id="fig|386585.9.peg.728"/>
<dbReference type="HOGENOM" id="CLU_177638_3_0_6"/>
<dbReference type="Proteomes" id="UP000000558">
    <property type="component" value="Chromosome"/>
</dbReference>
<dbReference type="Proteomes" id="UP000002519">
    <property type="component" value="Chromosome"/>
</dbReference>
<dbReference type="GO" id="GO:0005886">
    <property type="term" value="C:plasma membrane"/>
    <property type="evidence" value="ECO:0007669"/>
    <property type="project" value="UniProtKB-SubCell"/>
</dbReference>
<dbReference type="InterPro" id="IPR000021">
    <property type="entry name" value="Hok/gef_toxin"/>
</dbReference>
<dbReference type="Pfam" id="PF01848">
    <property type="entry name" value="HOK_GEF"/>
    <property type="match status" value="1"/>
</dbReference>
<dbReference type="PRINTS" id="PR00281">
    <property type="entry name" value="HOKGEFTOXIC"/>
</dbReference>
<accession>Q8XBX0</accession>
<accession>Q7AGS3</accession>
<keyword id="KW-0997">Cell inner membrane</keyword>
<keyword id="KW-1003">Cell membrane</keyword>
<keyword id="KW-0472">Membrane</keyword>
<keyword id="KW-1185">Reference proteome</keyword>
<keyword id="KW-1277">Toxin-antitoxin system</keyword>
<keyword id="KW-0812">Transmembrane</keyword>
<keyword id="KW-1133">Transmembrane helix</keyword>
<evidence type="ECO:0000250" key="1">
    <source>
        <dbReference type="UniProtKB" id="P0ACG4"/>
    </source>
</evidence>
<evidence type="ECO:0000255" key="2"/>
<evidence type="ECO:0000305" key="3"/>
<organism>
    <name type="scientific">Escherichia coli O157:H7</name>
    <dbReference type="NCBI Taxonomy" id="83334"/>
    <lineage>
        <taxon>Bacteria</taxon>
        <taxon>Pseudomonadati</taxon>
        <taxon>Pseudomonadota</taxon>
        <taxon>Gammaproteobacteria</taxon>
        <taxon>Enterobacterales</taxon>
        <taxon>Enterobacteriaceae</taxon>
        <taxon>Escherichia</taxon>
    </lineage>
</organism>
<name>HOKF_ECO57</name>
<feature type="chain" id="PRO_0000199039" description="Putative protein HokF">
    <location>
        <begin position="1"/>
        <end position="50"/>
    </location>
</feature>
<feature type="transmembrane region" description="Helical" evidence="2">
    <location>
        <begin position="5"/>
        <end position="25"/>
    </location>
</feature>
<protein>
    <recommendedName>
        <fullName>Putative protein HokF</fullName>
    </recommendedName>
</protein>
<comment type="function">
    <text evidence="1">Toxic component of a type I toxin-antitoxin (TA) system (By similarity). When overexpressed kills cells within minutes; causes collapse of the transmembrane potential and arrest of respiration (By similarity). Its toxic effect is probably neutralized by an antisense antitoxin Sok RNA (By similarity).</text>
</comment>
<comment type="subcellular location">
    <subcellularLocation>
        <location evidence="1">Cell inner membrane</location>
        <topology evidence="3">Single-pass membrane protein</topology>
    </subcellularLocation>
</comment>
<comment type="similarity">
    <text evidence="3">Belongs to the Hok/Gef family.</text>
</comment>
<comment type="sequence caution" evidence="3">
    <conflict type="erroneous initiation">
        <sequence resource="EMBL-CDS" id="AAG54915"/>
    </conflict>
    <text>Extended N-terminus.</text>
</comment>
<gene>
    <name type="primary">hokF</name>
    <name type="ordered locus">Z0721</name>
    <name type="ordered locus">ECs0620</name>
</gene>
<reference key="1">
    <citation type="journal article" date="2001" name="Nature">
        <title>Genome sequence of enterohaemorrhagic Escherichia coli O157:H7.</title>
        <authorList>
            <person name="Perna N.T."/>
            <person name="Plunkett G. III"/>
            <person name="Burland V."/>
            <person name="Mau B."/>
            <person name="Glasner J.D."/>
            <person name="Rose D.J."/>
            <person name="Mayhew G.F."/>
            <person name="Evans P.S."/>
            <person name="Gregor J."/>
            <person name="Kirkpatrick H.A."/>
            <person name="Posfai G."/>
            <person name="Hackett J."/>
            <person name="Klink S."/>
            <person name="Boutin A."/>
            <person name="Shao Y."/>
            <person name="Miller L."/>
            <person name="Grotbeck E.J."/>
            <person name="Davis N.W."/>
            <person name="Lim A."/>
            <person name="Dimalanta E.T."/>
            <person name="Potamousis K."/>
            <person name="Apodaca J."/>
            <person name="Anantharaman T.S."/>
            <person name="Lin J."/>
            <person name="Yen G."/>
            <person name="Schwartz D.C."/>
            <person name="Welch R.A."/>
            <person name="Blattner F.R."/>
        </authorList>
    </citation>
    <scope>NUCLEOTIDE SEQUENCE [LARGE SCALE GENOMIC DNA]</scope>
    <source>
        <strain>O157:H7 / EDL933 / ATCC 700927 / EHEC</strain>
    </source>
</reference>
<reference key="2">
    <citation type="journal article" date="2001" name="DNA Res.">
        <title>Complete genome sequence of enterohemorrhagic Escherichia coli O157:H7 and genomic comparison with a laboratory strain K-12.</title>
        <authorList>
            <person name="Hayashi T."/>
            <person name="Makino K."/>
            <person name="Ohnishi M."/>
            <person name="Kurokawa K."/>
            <person name="Ishii K."/>
            <person name="Yokoyama K."/>
            <person name="Han C.-G."/>
            <person name="Ohtsubo E."/>
            <person name="Nakayama K."/>
            <person name="Murata T."/>
            <person name="Tanaka M."/>
            <person name="Tobe T."/>
            <person name="Iida T."/>
            <person name="Takami H."/>
            <person name="Honda T."/>
            <person name="Sasakawa C."/>
            <person name="Ogasawara N."/>
            <person name="Yasunaga T."/>
            <person name="Kuhara S."/>
            <person name="Shiba T."/>
            <person name="Hattori M."/>
            <person name="Shinagawa H."/>
        </authorList>
    </citation>
    <scope>NUCLEOTIDE SEQUENCE [LARGE SCALE GENOMIC DNA]</scope>
    <source>
        <strain>O157:H7 / Sakai / RIMD 0509952 / EHEC</strain>
    </source>
</reference>
<sequence length="50" mass="5604">MLTKYALVAVIVLCLTVPGFTLLVGDSLCEFTVKERNIEFRAVLAYEPKK</sequence>